<sequence length="601" mass="66513">MEGSDFLLAGVLFLFAAVAAVPLASRLGIGAVLGYLLAGIAIGPWGLGFISDVDEILHFSELGVVFLMFIIGLELNPSKLWQLRRSIFGVGAAQVLLSAALLAGLLMLTHFSWQAAVVGGIGLAMSSTAMALQLMREKGMNRSESGQLGFSVLLFQDLAVIPALALVPLLAGSADEHFDWMKIGMKVLAFVGMLIGGRYLLRPVFRFIAASGVREVFTAATLLLVLGSALFMDALGLSMALGTFIAGVLLAESEYRHELETAIDPFKGLLLGLFFISVGMSLNLGVLYTHLLWVVISVVVLVAVKIFVLYLLARLYGVRSSERMQFAGVLSQGGEFAFVLFSSASSQRLFQGDQMALLLVTVTLSMMTTPLLMKLVDKWLSRQFNGPEEEDEKPWVNDDKPQVIVVGFGRFGQVIGRLLMANKMRITVLERDISAVNLMRKYGYKVYYGDATQVDLLRSAGAEAAESIVITCNEPEDTMKLVEICQQHFPHLHILARARGRVEAHELLQAGVTQFSRETFSSALELGRKTLVTLGMHPHQAQRAQLHFRRLDMRMLRELIPMHTDTVQISRAREARRELEEIFQREMQQERRQLDGWDEFE</sequence>
<gene>
    <name evidence="1" type="primary">kefB</name>
    <name type="ordered locus">E2348C_3600</name>
</gene>
<dbReference type="EMBL" id="FM180568">
    <property type="protein sequence ID" value="CAS11148.1"/>
    <property type="molecule type" value="Genomic_DNA"/>
</dbReference>
<dbReference type="RefSeq" id="WP_000399158.1">
    <property type="nucleotide sequence ID" value="NC_011601.1"/>
</dbReference>
<dbReference type="SMR" id="B7UK61"/>
<dbReference type="KEGG" id="ecg:E2348C_3600"/>
<dbReference type="HOGENOM" id="CLU_005126_9_3_6"/>
<dbReference type="Proteomes" id="UP000008205">
    <property type="component" value="Chromosome"/>
</dbReference>
<dbReference type="GO" id="GO:0005886">
    <property type="term" value="C:plasma membrane"/>
    <property type="evidence" value="ECO:0007669"/>
    <property type="project" value="UniProtKB-SubCell"/>
</dbReference>
<dbReference type="GO" id="GO:0015503">
    <property type="term" value="F:glutathione-regulated potassium exporter activity"/>
    <property type="evidence" value="ECO:0007669"/>
    <property type="project" value="UniProtKB-UniRule"/>
</dbReference>
<dbReference type="GO" id="GO:1902600">
    <property type="term" value="P:proton transmembrane transport"/>
    <property type="evidence" value="ECO:0007669"/>
    <property type="project" value="InterPro"/>
</dbReference>
<dbReference type="FunFam" id="1.20.1530.20:FF:000001">
    <property type="entry name" value="Glutathione-regulated potassium-efflux system protein KefB"/>
    <property type="match status" value="1"/>
</dbReference>
<dbReference type="FunFam" id="3.40.50.720:FF:000036">
    <property type="entry name" value="Glutathione-regulated potassium-efflux system protein KefB"/>
    <property type="match status" value="1"/>
</dbReference>
<dbReference type="Gene3D" id="1.20.1530.20">
    <property type="match status" value="1"/>
</dbReference>
<dbReference type="Gene3D" id="3.40.50.720">
    <property type="entry name" value="NAD(P)-binding Rossmann-like Domain"/>
    <property type="match status" value="1"/>
</dbReference>
<dbReference type="HAMAP" id="MF_01412">
    <property type="entry name" value="K_H_efflux_KefB"/>
    <property type="match status" value="1"/>
</dbReference>
<dbReference type="InterPro" id="IPR006153">
    <property type="entry name" value="Cation/H_exchanger_TM"/>
</dbReference>
<dbReference type="InterPro" id="IPR004771">
    <property type="entry name" value="K/H_exchanger"/>
</dbReference>
<dbReference type="InterPro" id="IPR020884">
    <property type="entry name" value="K_H_efflux_KefB"/>
</dbReference>
<dbReference type="InterPro" id="IPR038770">
    <property type="entry name" value="Na+/solute_symporter_sf"/>
</dbReference>
<dbReference type="InterPro" id="IPR036291">
    <property type="entry name" value="NAD(P)-bd_dom_sf"/>
</dbReference>
<dbReference type="InterPro" id="IPR003148">
    <property type="entry name" value="RCK_N"/>
</dbReference>
<dbReference type="NCBIfam" id="TIGR00932">
    <property type="entry name" value="2a37"/>
    <property type="match status" value="1"/>
</dbReference>
<dbReference type="NCBIfam" id="NF002973">
    <property type="entry name" value="PRK03659.1"/>
    <property type="match status" value="1"/>
</dbReference>
<dbReference type="PANTHER" id="PTHR46157">
    <property type="entry name" value="K(+) EFFLUX ANTIPORTER 3, CHLOROPLASTIC"/>
    <property type="match status" value="1"/>
</dbReference>
<dbReference type="PANTHER" id="PTHR46157:SF4">
    <property type="entry name" value="K(+) EFFLUX ANTIPORTER 3, CHLOROPLASTIC"/>
    <property type="match status" value="1"/>
</dbReference>
<dbReference type="Pfam" id="PF00999">
    <property type="entry name" value="Na_H_Exchanger"/>
    <property type="match status" value="1"/>
</dbReference>
<dbReference type="Pfam" id="PF02254">
    <property type="entry name" value="TrkA_N"/>
    <property type="match status" value="1"/>
</dbReference>
<dbReference type="SUPFAM" id="SSF51735">
    <property type="entry name" value="NAD(P)-binding Rossmann-fold domains"/>
    <property type="match status" value="1"/>
</dbReference>
<dbReference type="PROSITE" id="PS51201">
    <property type="entry name" value="RCK_N"/>
    <property type="match status" value="1"/>
</dbReference>
<evidence type="ECO:0000255" key="1">
    <source>
        <dbReference type="HAMAP-Rule" id="MF_01412"/>
    </source>
</evidence>
<evidence type="ECO:0000255" key="2">
    <source>
        <dbReference type="PROSITE-ProRule" id="PRU00543"/>
    </source>
</evidence>
<proteinExistence type="inferred from homology"/>
<accession>B7UK61</accession>
<keyword id="KW-0050">Antiport</keyword>
<keyword id="KW-0997">Cell inner membrane</keyword>
<keyword id="KW-1003">Cell membrane</keyword>
<keyword id="KW-0406">Ion transport</keyword>
<keyword id="KW-0472">Membrane</keyword>
<keyword id="KW-0630">Potassium</keyword>
<keyword id="KW-0633">Potassium transport</keyword>
<keyword id="KW-1185">Reference proteome</keyword>
<keyword id="KW-0812">Transmembrane</keyword>
<keyword id="KW-1133">Transmembrane helix</keyword>
<keyword id="KW-0813">Transport</keyword>
<comment type="function">
    <text evidence="1">Pore-forming subunit of a potassium efflux system that confers protection against electrophiles. Catalyzes K(+)/H(+) antiport.</text>
</comment>
<comment type="subunit">
    <text evidence="1">Interacts with the regulatory subunit KefG.</text>
</comment>
<comment type="subcellular location">
    <subcellularLocation>
        <location evidence="1">Cell inner membrane</location>
        <topology evidence="1">Multi-pass membrane protein</topology>
    </subcellularLocation>
</comment>
<comment type="similarity">
    <text evidence="1">Belongs to the monovalent cation:proton antiporter 2 (CPA2) transporter (TC 2.A.37) family. KefB subfamily.</text>
</comment>
<feature type="chain" id="PRO_1000184611" description="Glutathione-regulated potassium-efflux system protein KefB">
    <location>
        <begin position="1"/>
        <end position="601"/>
    </location>
</feature>
<feature type="transmembrane region" description="Helical" evidence="1">
    <location>
        <begin position="4"/>
        <end position="24"/>
    </location>
</feature>
<feature type="transmembrane region" description="Helical" evidence="1">
    <location>
        <begin position="29"/>
        <end position="49"/>
    </location>
</feature>
<feature type="transmembrane region" description="Helical" evidence="1">
    <location>
        <begin position="55"/>
        <end position="75"/>
    </location>
</feature>
<feature type="transmembrane region" description="Helical" evidence="1">
    <location>
        <begin position="87"/>
        <end position="107"/>
    </location>
</feature>
<feature type="transmembrane region" description="Helical" evidence="1">
    <location>
        <begin position="115"/>
        <end position="135"/>
    </location>
</feature>
<feature type="transmembrane region" description="Helical" evidence="1">
    <location>
        <begin position="152"/>
        <end position="172"/>
    </location>
</feature>
<feature type="transmembrane region" description="Helical" evidence="1">
    <location>
        <begin position="177"/>
        <end position="197"/>
    </location>
</feature>
<feature type="transmembrane region" description="Helical" evidence="1">
    <location>
        <begin position="207"/>
        <end position="227"/>
    </location>
</feature>
<feature type="transmembrane region" description="Helical" evidence="1">
    <location>
        <begin position="230"/>
        <end position="250"/>
    </location>
</feature>
<feature type="transmembrane region" description="Helical" evidence="1">
    <location>
        <begin position="268"/>
        <end position="288"/>
    </location>
</feature>
<feature type="transmembrane region" description="Helical" evidence="1">
    <location>
        <begin position="291"/>
        <end position="311"/>
    </location>
</feature>
<feature type="transmembrane region" description="Helical" evidence="1">
    <location>
        <begin position="324"/>
        <end position="344"/>
    </location>
</feature>
<feature type="transmembrane region" description="Helical" evidence="1">
    <location>
        <begin position="356"/>
        <end position="376"/>
    </location>
</feature>
<feature type="domain" description="RCK N-terminal" evidence="2">
    <location>
        <begin position="400"/>
        <end position="519"/>
    </location>
</feature>
<name>KEFB_ECO27</name>
<organism>
    <name type="scientific">Escherichia coli O127:H6 (strain E2348/69 / EPEC)</name>
    <dbReference type="NCBI Taxonomy" id="574521"/>
    <lineage>
        <taxon>Bacteria</taxon>
        <taxon>Pseudomonadati</taxon>
        <taxon>Pseudomonadota</taxon>
        <taxon>Gammaproteobacteria</taxon>
        <taxon>Enterobacterales</taxon>
        <taxon>Enterobacteriaceae</taxon>
        <taxon>Escherichia</taxon>
    </lineage>
</organism>
<reference key="1">
    <citation type="journal article" date="2009" name="J. Bacteriol.">
        <title>Complete genome sequence and comparative genome analysis of enteropathogenic Escherichia coli O127:H6 strain E2348/69.</title>
        <authorList>
            <person name="Iguchi A."/>
            <person name="Thomson N.R."/>
            <person name="Ogura Y."/>
            <person name="Saunders D."/>
            <person name="Ooka T."/>
            <person name="Henderson I.R."/>
            <person name="Harris D."/>
            <person name="Asadulghani M."/>
            <person name="Kurokawa K."/>
            <person name="Dean P."/>
            <person name="Kenny B."/>
            <person name="Quail M.A."/>
            <person name="Thurston S."/>
            <person name="Dougan G."/>
            <person name="Hayashi T."/>
            <person name="Parkhill J."/>
            <person name="Frankel G."/>
        </authorList>
    </citation>
    <scope>NUCLEOTIDE SEQUENCE [LARGE SCALE GENOMIC DNA]</scope>
    <source>
        <strain>E2348/69 / EPEC</strain>
    </source>
</reference>
<protein>
    <recommendedName>
        <fullName evidence="1">Glutathione-regulated potassium-efflux system protein KefB</fullName>
    </recommendedName>
    <alternativeName>
        <fullName evidence="1">K(+)/H(+) antiporter</fullName>
    </alternativeName>
</protein>